<protein>
    <recommendedName>
        <fullName evidence="1">Large ribosomal subunit protein bL31</fullName>
    </recommendedName>
    <alternativeName>
        <fullName evidence="2">50S ribosomal protein L31</fullName>
    </alternativeName>
</protein>
<evidence type="ECO:0000255" key="1">
    <source>
        <dbReference type="HAMAP-Rule" id="MF_00501"/>
    </source>
</evidence>
<evidence type="ECO:0000305" key="2"/>
<name>RL31_HELP2</name>
<organism>
    <name type="scientific">Helicobacter pylori (strain P12)</name>
    <dbReference type="NCBI Taxonomy" id="570508"/>
    <lineage>
        <taxon>Bacteria</taxon>
        <taxon>Pseudomonadati</taxon>
        <taxon>Campylobacterota</taxon>
        <taxon>Epsilonproteobacteria</taxon>
        <taxon>Campylobacterales</taxon>
        <taxon>Helicobacteraceae</taxon>
        <taxon>Helicobacter</taxon>
    </lineage>
</organism>
<dbReference type="EMBL" id="CP001217">
    <property type="protein sequence ID" value="ACJ07712.1"/>
    <property type="molecule type" value="Genomic_DNA"/>
</dbReference>
<dbReference type="SMR" id="B6JLD4"/>
<dbReference type="KEGG" id="hpp:HPP12_0558"/>
<dbReference type="HOGENOM" id="CLU_114306_4_0_7"/>
<dbReference type="Proteomes" id="UP000008198">
    <property type="component" value="Chromosome"/>
</dbReference>
<dbReference type="GO" id="GO:1990904">
    <property type="term" value="C:ribonucleoprotein complex"/>
    <property type="evidence" value="ECO:0007669"/>
    <property type="project" value="UniProtKB-KW"/>
</dbReference>
<dbReference type="GO" id="GO:0005840">
    <property type="term" value="C:ribosome"/>
    <property type="evidence" value="ECO:0007669"/>
    <property type="project" value="UniProtKB-KW"/>
</dbReference>
<dbReference type="GO" id="GO:0019843">
    <property type="term" value="F:rRNA binding"/>
    <property type="evidence" value="ECO:0007669"/>
    <property type="project" value="UniProtKB-KW"/>
</dbReference>
<dbReference type="GO" id="GO:0003735">
    <property type="term" value="F:structural constituent of ribosome"/>
    <property type="evidence" value="ECO:0007669"/>
    <property type="project" value="InterPro"/>
</dbReference>
<dbReference type="GO" id="GO:0006412">
    <property type="term" value="P:translation"/>
    <property type="evidence" value="ECO:0007669"/>
    <property type="project" value="UniProtKB-UniRule"/>
</dbReference>
<dbReference type="Gene3D" id="4.10.830.30">
    <property type="entry name" value="Ribosomal protein L31"/>
    <property type="match status" value="1"/>
</dbReference>
<dbReference type="HAMAP" id="MF_00501">
    <property type="entry name" value="Ribosomal_bL31_1"/>
    <property type="match status" value="1"/>
</dbReference>
<dbReference type="InterPro" id="IPR034704">
    <property type="entry name" value="Ribosomal_bL28/bL31-like_sf"/>
</dbReference>
<dbReference type="InterPro" id="IPR002150">
    <property type="entry name" value="Ribosomal_bL31"/>
</dbReference>
<dbReference type="InterPro" id="IPR027491">
    <property type="entry name" value="Ribosomal_bL31_A"/>
</dbReference>
<dbReference type="InterPro" id="IPR042105">
    <property type="entry name" value="Ribosomal_bL31_sf"/>
</dbReference>
<dbReference type="NCBIfam" id="TIGR00105">
    <property type="entry name" value="L31"/>
    <property type="match status" value="1"/>
</dbReference>
<dbReference type="NCBIfam" id="NF000612">
    <property type="entry name" value="PRK00019.1"/>
    <property type="match status" value="1"/>
</dbReference>
<dbReference type="NCBIfam" id="NF001809">
    <property type="entry name" value="PRK00528.1"/>
    <property type="match status" value="1"/>
</dbReference>
<dbReference type="PANTHER" id="PTHR33280">
    <property type="entry name" value="50S RIBOSOMAL PROTEIN L31, CHLOROPLASTIC"/>
    <property type="match status" value="1"/>
</dbReference>
<dbReference type="PANTHER" id="PTHR33280:SF6">
    <property type="entry name" value="LARGE RIBOSOMAL SUBUNIT PROTEIN BL31A"/>
    <property type="match status" value="1"/>
</dbReference>
<dbReference type="Pfam" id="PF01197">
    <property type="entry name" value="Ribosomal_L31"/>
    <property type="match status" value="1"/>
</dbReference>
<dbReference type="PRINTS" id="PR01249">
    <property type="entry name" value="RIBOSOMALL31"/>
</dbReference>
<dbReference type="SUPFAM" id="SSF143800">
    <property type="entry name" value="L28p-like"/>
    <property type="match status" value="1"/>
</dbReference>
<dbReference type="PROSITE" id="PS01143">
    <property type="entry name" value="RIBOSOMAL_L31"/>
    <property type="match status" value="1"/>
</dbReference>
<reference key="1">
    <citation type="submission" date="2008-10" db="EMBL/GenBank/DDBJ databases">
        <title>The complete genome sequence of Helicobacter pylori strain P12.</title>
        <authorList>
            <person name="Fischer W."/>
            <person name="Windhager L."/>
            <person name="Karnholz A."/>
            <person name="Zeiller M."/>
            <person name="Zimmer R."/>
            <person name="Haas R."/>
        </authorList>
    </citation>
    <scope>NUCLEOTIDE SEQUENCE [LARGE SCALE GENOMIC DNA]</scope>
    <source>
        <strain>P12</strain>
    </source>
</reference>
<proteinExistence type="inferred from homology"/>
<keyword id="KW-0687">Ribonucleoprotein</keyword>
<keyword id="KW-0689">Ribosomal protein</keyword>
<keyword id="KW-0694">RNA-binding</keyword>
<keyword id="KW-0699">rRNA-binding</keyword>
<accession>B6JLD4</accession>
<gene>
    <name evidence="1" type="primary">rpmE</name>
    <name type="ordered locus">HPP12_0558</name>
</gene>
<comment type="function">
    <text evidence="1">Binds the 23S rRNA.</text>
</comment>
<comment type="subunit">
    <text evidence="1">Part of the 50S ribosomal subunit.</text>
</comment>
<comment type="similarity">
    <text evidence="1">Belongs to the bacterial ribosomal protein bL31 family. Type A subfamily.</text>
</comment>
<feature type="chain" id="PRO_1000126644" description="Large ribosomal subunit protein bL31">
    <location>
        <begin position="1"/>
        <end position="67"/>
    </location>
</feature>
<sequence>MKKGIHPEYIPCKVTCVTSGKEIEVLSTKPEMRIDISSFCHPFYTGSDKIADTAGRVEKFKQRYNLK</sequence>